<evidence type="ECO:0000255" key="1"/>
<evidence type="ECO:0000305" key="2"/>
<organism>
    <name type="scientific">Aeromonas hydrophila</name>
    <dbReference type="NCBI Taxonomy" id="644"/>
    <lineage>
        <taxon>Bacteria</taxon>
        <taxon>Pseudomonadati</taxon>
        <taxon>Pseudomonadota</taxon>
        <taxon>Gammaproteobacteria</taxon>
        <taxon>Aeromonadales</taxon>
        <taxon>Aeromonadaceae</taxon>
        <taxon>Aeromonas</taxon>
    </lineage>
</organism>
<keyword id="KW-0255">Endonuclease</keyword>
<keyword id="KW-0378">Hydrolase</keyword>
<keyword id="KW-0540">Nuclease</keyword>
<keyword id="KW-0574">Periplasm</keyword>
<keyword id="KW-0732">Signal</keyword>
<gene>
    <name type="primary">dnsH</name>
</gene>
<feature type="signal peptide" evidence="1">
    <location>
        <begin position="1"/>
        <end position="27"/>
    </location>
</feature>
<feature type="chain" id="PRO_0000007831" description="Periplasmic deoxyribonuclease">
    <location>
        <begin position="28"/>
        <end position="237"/>
    </location>
</feature>
<dbReference type="EC" id="3.1.21.-"/>
<dbReference type="EMBL" id="L78266">
    <property type="protein sequence ID" value="AAB01347.1"/>
    <property type="molecule type" value="Genomic_DNA"/>
</dbReference>
<dbReference type="SMR" id="Q44064"/>
<dbReference type="GO" id="GO:0042597">
    <property type="term" value="C:periplasmic space"/>
    <property type="evidence" value="ECO:0007669"/>
    <property type="project" value="UniProtKB-SubCell"/>
</dbReference>
<dbReference type="GO" id="GO:0004519">
    <property type="term" value="F:endonuclease activity"/>
    <property type="evidence" value="ECO:0007669"/>
    <property type="project" value="UniProtKB-KW"/>
</dbReference>
<dbReference type="InterPro" id="IPR007346">
    <property type="entry name" value="Endonuclease-I"/>
</dbReference>
<dbReference type="InterPro" id="IPR044925">
    <property type="entry name" value="His-Me_finger_sf"/>
</dbReference>
<dbReference type="PANTHER" id="PTHR33607">
    <property type="entry name" value="ENDONUCLEASE-1"/>
    <property type="match status" value="1"/>
</dbReference>
<dbReference type="PANTHER" id="PTHR33607:SF2">
    <property type="entry name" value="ENDONUCLEASE-1"/>
    <property type="match status" value="1"/>
</dbReference>
<dbReference type="Pfam" id="PF04231">
    <property type="entry name" value="Endonuclease_1"/>
    <property type="match status" value="1"/>
</dbReference>
<dbReference type="SUPFAM" id="SSF54060">
    <property type="entry name" value="His-Me finger endonucleases"/>
    <property type="match status" value="1"/>
</dbReference>
<sequence length="237" mass="27377">MSRPSRVLGLPLLSLGLTLLVSTPLQAQEAQTFRAVKQDLVKLYQSHPSTFYCGCNIKFSGKKMAPDWESCGYLPRKQANRAARIEWEHVVPAWEFGHQLQCWQEGGRKNCGKSAEFNKMEGDMHNLFPAIGEVNGDRANYRFSDWNGKPNQYGKCQMLVDFKEQRVQPPKGPVRGQIARAYLYMGEQYGLRLAAQQRKLFEAWDRQYPADRWECERNRRIGKLQGNTNPFIEKQCQ</sequence>
<protein>
    <recommendedName>
        <fullName>Periplasmic deoxyribonuclease</fullName>
        <shortName>DNase</shortName>
        <ecNumber>3.1.21.-</ecNumber>
    </recommendedName>
</protein>
<reference key="1">
    <citation type="journal article" date="1999" name="FEMS Microbiol. Lett.">
        <title>The gene encoding a periplasmic deoxyribonuclease from Aeromonas hydrophila.</title>
        <authorList>
            <person name="Dodd H.N."/>
            <person name="Pemberton J.M."/>
        </authorList>
    </citation>
    <scope>NUCLEOTIDE SEQUENCE [GENOMIC DNA]</scope>
    <source>
        <strain>JMP636</strain>
    </source>
</reference>
<proteinExistence type="inferred from homology"/>
<comment type="function">
    <text>Endonuclease which is capable of degrading plasmid DNA.</text>
</comment>
<comment type="subcellular location">
    <subcellularLocation>
        <location>Periplasm</location>
    </subcellularLocation>
</comment>
<comment type="similarity">
    <text evidence="2">Belongs to the EndA/NucM nuclease family.</text>
</comment>
<name>DRNF_AERHY</name>
<accession>Q44064</accession>